<gene>
    <name type="primary">rabepk</name>
</gene>
<proteinExistence type="evidence at transcript level"/>
<organism>
    <name type="scientific">Xenopus laevis</name>
    <name type="common">African clawed frog</name>
    <dbReference type="NCBI Taxonomy" id="8355"/>
    <lineage>
        <taxon>Eukaryota</taxon>
        <taxon>Metazoa</taxon>
        <taxon>Chordata</taxon>
        <taxon>Craniata</taxon>
        <taxon>Vertebrata</taxon>
        <taxon>Euteleostomi</taxon>
        <taxon>Amphibia</taxon>
        <taxon>Batrachia</taxon>
        <taxon>Anura</taxon>
        <taxon>Pipoidea</taxon>
        <taxon>Pipidae</taxon>
        <taxon>Xenopodinae</taxon>
        <taxon>Xenopus</taxon>
        <taxon>Xenopus</taxon>
    </lineage>
</organism>
<sequence length="366" mass="39923">MGLLEVLDPEDLPKMSTWYALVPRGEGPSARVGHTCMYVSSSEDSSKGKILILGGADPSGCYSDTHIIDLDNHEWDNPDSEGLLPRYEHASFISASNPGNIWVFAGAEQAENRNCVQVLNPGAASWKSPKVMGTPPSPRTFHTSSAAIEDKLYVFGGGEKGAEPVADTNLYIYDAATMTWTQPVTSGDPPQARHGHVLTALGTKLFVHGGMAGSTFFKDMFCIDTDTMKWERLKTKGDLPPACAAHSSVAWKSYIYIFGGMTSTGATNSMYRYNTETLLWKQLKFDSACPPARLDHSMCLLPWKTRTNTDNAEKLPCKAKEESNLKECSSATSKTLEQGIVHLCFIFGGMDTDGELHSDCCVTILQ</sequence>
<dbReference type="EMBL" id="BC079681">
    <property type="protein sequence ID" value="AAH79681.1"/>
    <property type="molecule type" value="mRNA"/>
</dbReference>
<dbReference type="RefSeq" id="NP_001087370.1">
    <property type="nucleotide sequence ID" value="NM_001093901.1"/>
</dbReference>
<dbReference type="SMR" id="Q6AXB2"/>
<dbReference type="DNASU" id="447194"/>
<dbReference type="GeneID" id="447194"/>
<dbReference type="KEGG" id="xla:447194"/>
<dbReference type="AGR" id="Xenbase:XB-GENE-1009619"/>
<dbReference type="CTD" id="447194"/>
<dbReference type="Xenbase" id="XB-GENE-1009619">
    <property type="gene designation" value="rabepk.L"/>
</dbReference>
<dbReference type="OrthoDB" id="10251809at2759"/>
<dbReference type="Proteomes" id="UP000186698">
    <property type="component" value="Chromosome 8L"/>
</dbReference>
<dbReference type="Bgee" id="447194">
    <property type="expression patterns" value="Expressed in oocyte and 19 other cell types or tissues"/>
</dbReference>
<dbReference type="Gene3D" id="2.120.10.80">
    <property type="entry name" value="Kelch-type beta propeller"/>
    <property type="match status" value="2"/>
</dbReference>
<dbReference type="InterPro" id="IPR011043">
    <property type="entry name" value="Gal_Oxase/kelch_b-propeller"/>
</dbReference>
<dbReference type="InterPro" id="IPR015915">
    <property type="entry name" value="Kelch-typ_b-propeller"/>
</dbReference>
<dbReference type="InterPro" id="IPR052124">
    <property type="entry name" value="Rab9_kelch_effector"/>
</dbReference>
<dbReference type="PANTHER" id="PTHR46647">
    <property type="entry name" value="RAB9 EFFECTOR PROTEIN WITH KELCH MOTIFS"/>
    <property type="match status" value="1"/>
</dbReference>
<dbReference type="PANTHER" id="PTHR46647:SF1">
    <property type="entry name" value="RAB9 EFFECTOR PROTEIN WITH KELCH MOTIFS"/>
    <property type="match status" value="1"/>
</dbReference>
<dbReference type="Pfam" id="PF24681">
    <property type="entry name" value="Kelch_KLHDC2_KLHL20_DRC7"/>
    <property type="match status" value="1"/>
</dbReference>
<dbReference type="SUPFAM" id="SSF50965">
    <property type="entry name" value="Galactose oxidase, central domain"/>
    <property type="match status" value="1"/>
</dbReference>
<name>RABEK_XENLA</name>
<accession>Q6AXB2</accession>
<keyword id="KW-0880">Kelch repeat</keyword>
<keyword id="KW-1185">Reference proteome</keyword>
<keyword id="KW-0677">Repeat</keyword>
<protein>
    <recommendedName>
        <fullName>Rab9 effector protein with kelch motifs</fullName>
    </recommendedName>
</protein>
<reference key="1">
    <citation type="submission" date="2004-08" db="EMBL/GenBank/DDBJ databases">
        <authorList>
            <consortium name="NIH - Xenopus Gene Collection (XGC) project"/>
        </authorList>
    </citation>
    <scope>NUCLEOTIDE SEQUENCE [LARGE SCALE MRNA]</scope>
</reference>
<feature type="chain" id="PRO_0000280621" description="Rab9 effector protein with kelch motifs">
    <location>
        <begin position="1"/>
        <end position="366"/>
    </location>
</feature>
<feature type="repeat" description="Kelch 1">
    <location>
        <begin position="49"/>
        <end position="95"/>
    </location>
</feature>
<feature type="repeat" description="Kelch 2">
    <location>
        <begin position="100"/>
        <end position="146"/>
    </location>
</feature>
<feature type="repeat" description="Kelch 3">
    <location>
        <begin position="151"/>
        <end position="200"/>
    </location>
</feature>
<feature type="repeat" description="Kelch 4">
    <location>
        <begin position="204"/>
        <end position="253"/>
    </location>
</feature>
<feature type="repeat" description="Kelch 5">
    <location>
        <begin position="254"/>
        <end position="303"/>
    </location>
</feature>
<feature type="repeat" description="Kelch 6">
    <location>
        <begin position="343"/>
        <end position="366"/>
    </location>
</feature>
<comment type="function">
    <text evidence="1">Rab9 effector required for endosome to trans-Golgi network (TGN) transport.</text>
</comment>
<evidence type="ECO:0000250" key="1"/>